<accession>Q06GK6</accession>
<name>PSAC_PIPCE</name>
<gene>
    <name evidence="2" type="primary">psaC</name>
</gene>
<protein>
    <recommendedName>
        <fullName evidence="2">Photosystem I iron-sulfur center</fullName>
        <ecNumber evidence="2">1.97.1.12</ecNumber>
    </recommendedName>
    <alternativeName>
        <fullName evidence="2">9 kDa polypeptide</fullName>
    </alternativeName>
    <alternativeName>
        <fullName evidence="2">PSI-C</fullName>
    </alternativeName>
    <alternativeName>
        <fullName evidence="2">Photosystem I subunit VII</fullName>
    </alternativeName>
    <alternativeName>
        <fullName evidence="2">PsaC</fullName>
    </alternativeName>
</protein>
<reference key="1">
    <citation type="journal article" date="2006" name="BMC Evol. Biol.">
        <title>Complete plastid genome sequences of Drimys, Liriodendron, and Piper: implications for the phylogenetic relationships of magnoliids.</title>
        <authorList>
            <person name="Cai Z."/>
            <person name="Penaflor C."/>
            <person name="Kuehl J.V."/>
            <person name="Leebens-Mack J."/>
            <person name="Carlson J.E."/>
            <person name="dePamphilis C.W."/>
            <person name="Boore J.L."/>
            <person name="Jansen R.K."/>
        </authorList>
    </citation>
    <scope>NUCLEOTIDE SEQUENCE [LARGE SCALE GENOMIC DNA]</scope>
</reference>
<comment type="function">
    <text evidence="2">Apoprotein for the two 4Fe-4S centers FA and FB of photosystem I (PSI); essential for photochemical activity. FB is the terminal electron acceptor of PSI, donating electrons to ferredoxin. The C-terminus interacts with PsaA/B/D and helps assemble the protein into the PSI complex. Required for binding of PsaD and PsaE to PSI. PSI is a plastocyanin-ferredoxin oxidoreductase, converting photonic excitation into a charge separation, which transfers an electron from the donor P700 chlorophyll pair to the spectroscopically characterized acceptors A0, A1, FX, FA and FB in turn.</text>
</comment>
<comment type="catalytic activity">
    <reaction evidence="2">
        <text>reduced [plastocyanin] + hnu + oxidized [2Fe-2S]-[ferredoxin] = oxidized [plastocyanin] + reduced [2Fe-2S]-[ferredoxin]</text>
        <dbReference type="Rhea" id="RHEA:30407"/>
        <dbReference type="Rhea" id="RHEA-COMP:10000"/>
        <dbReference type="Rhea" id="RHEA-COMP:10001"/>
        <dbReference type="Rhea" id="RHEA-COMP:10039"/>
        <dbReference type="Rhea" id="RHEA-COMP:10040"/>
        <dbReference type="ChEBI" id="CHEBI:29036"/>
        <dbReference type="ChEBI" id="CHEBI:30212"/>
        <dbReference type="ChEBI" id="CHEBI:33737"/>
        <dbReference type="ChEBI" id="CHEBI:33738"/>
        <dbReference type="ChEBI" id="CHEBI:49552"/>
        <dbReference type="EC" id="1.97.1.12"/>
    </reaction>
</comment>
<comment type="cofactor">
    <cofactor evidence="2">
        <name>[4Fe-4S] cluster</name>
        <dbReference type="ChEBI" id="CHEBI:49883"/>
    </cofactor>
    <text evidence="2">Binds 2 [4Fe-4S] clusters. Cluster 2 is most probably the spectroscopically characterized electron acceptor FA and cluster 1 is most probably FB.</text>
</comment>
<comment type="subunit">
    <text evidence="2">The eukaryotic PSI reaction center is composed of at least 11 subunits.</text>
</comment>
<comment type="subcellular location">
    <subcellularLocation>
        <location evidence="2">Plastid</location>
        <location evidence="2">Chloroplast thylakoid membrane</location>
        <topology evidence="2">Peripheral membrane protein</topology>
        <orientation evidence="2">Stromal side</orientation>
    </subcellularLocation>
</comment>
<organism>
    <name type="scientific">Piper cenocladum</name>
    <name type="common">Ant piper</name>
    <dbReference type="NCBI Taxonomy" id="398741"/>
    <lineage>
        <taxon>Eukaryota</taxon>
        <taxon>Viridiplantae</taxon>
        <taxon>Streptophyta</taxon>
        <taxon>Embryophyta</taxon>
        <taxon>Tracheophyta</taxon>
        <taxon>Spermatophyta</taxon>
        <taxon>Magnoliopsida</taxon>
        <taxon>Magnoliidae</taxon>
        <taxon>Piperales</taxon>
        <taxon>Piperaceae</taxon>
        <taxon>Piper</taxon>
    </lineage>
</organism>
<proteinExistence type="inferred from homology"/>
<keyword id="KW-0004">4Fe-4S</keyword>
<keyword id="KW-0150">Chloroplast</keyword>
<keyword id="KW-0249">Electron transport</keyword>
<keyword id="KW-0408">Iron</keyword>
<keyword id="KW-0411">Iron-sulfur</keyword>
<keyword id="KW-0472">Membrane</keyword>
<keyword id="KW-0479">Metal-binding</keyword>
<keyword id="KW-0560">Oxidoreductase</keyword>
<keyword id="KW-0602">Photosynthesis</keyword>
<keyword id="KW-0603">Photosystem I</keyword>
<keyword id="KW-0934">Plastid</keyword>
<keyword id="KW-0677">Repeat</keyword>
<keyword id="KW-0793">Thylakoid</keyword>
<keyword id="KW-0813">Transport</keyword>
<sequence>MSHSVKIYDTCIGCTQCVRACPTDVLEMIPWDGCKAKQIASAPRTEDCVGCKRCESACPTDFLSVRVYLWHETTRSMGLAY</sequence>
<geneLocation type="chloroplast"/>
<feature type="initiator methionine" description="Removed" evidence="1">
    <location>
        <position position="1"/>
    </location>
</feature>
<feature type="chain" id="PRO_0000275995" description="Photosystem I iron-sulfur center">
    <location>
        <begin position="2"/>
        <end position="81"/>
    </location>
</feature>
<feature type="domain" description="4Fe-4S ferredoxin-type 1" evidence="2">
    <location>
        <begin position="2"/>
        <end position="31"/>
    </location>
</feature>
<feature type="domain" description="4Fe-4S ferredoxin-type 2" evidence="2">
    <location>
        <begin position="39"/>
        <end position="68"/>
    </location>
</feature>
<feature type="binding site" evidence="2">
    <location>
        <position position="11"/>
    </location>
    <ligand>
        <name>[4Fe-4S] cluster</name>
        <dbReference type="ChEBI" id="CHEBI:49883"/>
        <label>1</label>
    </ligand>
</feature>
<feature type="binding site" evidence="2">
    <location>
        <position position="14"/>
    </location>
    <ligand>
        <name>[4Fe-4S] cluster</name>
        <dbReference type="ChEBI" id="CHEBI:49883"/>
        <label>1</label>
    </ligand>
</feature>
<feature type="binding site" evidence="2">
    <location>
        <position position="17"/>
    </location>
    <ligand>
        <name>[4Fe-4S] cluster</name>
        <dbReference type="ChEBI" id="CHEBI:49883"/>
        <label>1</label>
    </ligand>
</feature>
<feature type="binding site" evidence="2">
    <location>
        <position position="21"/>
    </location>
    <ligand>
        <name>[4Fe-4S] cluster</name>
        <dbReference type="ChEBI" id="CHEBI:49883"/>
        <label>2</label>
    </ligand>
</feature>
<feature type="binding site" evidence="2">
    <location>
        <position position="48"/>
    </location>
    <ligand>
        <name>[4Fe-4S] cluster</name>
        <dbReference type="ChEBI" id="CHEBI:49883"/>
        <label>2</label>
    </ligand>
</feature>
<feature type="binding site" evidence="2">
    <location>
        <position position="51"/>
    </location>
    <ligand>
        <name>[4Fe-4S] cluster</name>
        <dbReference type="ChEBI" id="CHEBI:49883"/>
        <label>2</label>
    </ligand>
</feature>
<feature type="binding site" evidence="2">
    <location>
        <position position="54"/>
    </location>
    <ligand>
        <name>[4Fe-4S] cluster</name>
        <dbReference type="ChEBI" id="CHEBI:49883"/>
        <label>2</label>
    </ligand>
</feature>
<feature type="binding site" evidence="2">
    <location>
        <position position="58"/>
    </location>
    <ligand>
        <name>[4Fe-4S] cluster</name>
        <dbReference type="ChEBI" id="CHEBI:49883"/>
        <label>1</label>
    </ligand>
</feature>
<dbReference type="EC" id="1.97.1.12" evidence="2"/>
<dbReference type="EMBL" id="DQ887677">
    <property type="protein sequence ID" value="ABI14525.1"/>
    <property type="molecule type" value="Genomic_DNA"/>
</dbReference>
<dbReference type="RefSeq" id="YP_784527.1">
    <property type="nucleotide sequence ID" value="NC_008457.1"/>
</dbReference>
<dbReference type="SMR" id="Q06GK6"/>
<dbReference type="GeneID" id="4363704"/>
<dbReference type="GO" id="GO:0009535">
    <property type="term" value="C:chloroplast thylakoid membrane"/>
    <property type="evidence" value="ECO:0007669"/>
    <property type="project" value="UniProtKB-SubCell"/>
</dbReference>
<dbReference type="GO" id="GO:0009522">
    <property type="term" value="C:photosystem I"/>
    <property type="evidence" value="ECO:0007669"/>
    <property type="project" value="UniProtKB-KW"/>
</dbReference>
<dbReference type="GO" id="GO:0051539">
    <property type="term" value="F:4 iron, 4 sulfur cluster binding"/>
    <property type="evidence" value="ECO:0007669"/>
    <property type="project" value="UniProtKB-KW"/>
</dbReference>
<dbReference type="GO" id="GO:0009055">
    <property type="term" value="F:electron transfer activity"/>
    <property type="evidence" value="ECO:0007669"/>
    <property type="project" value="UniProtKB-UniRule"/>
</dbReference>
<dbReference type="GO" id="GO:0046872">
    <property type="term" value="F:metal ion binding"/>
    <property type="evidence" value="ECO:0007669"/>
    <property type="project" value="UniProtKB-KW"/>
</dbReference>
<dbReference type="GO" id="GO:0016491">
    <property type="term" value="F:oxidoreductase activity"/>
    <property type="evidence" value="ECO:0007669"/>
    <property type="project" value="UniProtKB-KW"/>
</dbReference>
<dbReference type="GO" id="GO:0009773">
    <property type="term" value="P:photosynthetic electron transport in photosystem I"/>
    <property type="evidence" value="ECO:0007669"/>
    <property type="project" value="InterPro"/>
</dbReference>
<dbReference type="FunFam" id="3.30.70.20:FF:000001">
    <property type="entry name" value="Photosystem I iron-sulfur center"/>
    <property type="match status" value="1"/>
</dbReference>
<dbReference type="Gene3D" id="3.30.70.20">
    <property type="match status" value="1"/>
</dbReference>
<dbReference type="HAMAP" id="MF_01303">
    <property type="entry name" value="PSI_PsaC"/>
    <property type="match status" value="1"/>
</dbReference>
<dbReference type="InterPro" id="IPR017896">
    <property type="entry name" value="4Fe4S_Fe-S-bd"/>
</dbReference>
<dbReference type="InterPro" id="IPR017900">
    <property type="entry name" value="4Fe4S_Fe_S_CS"/>
</dbReference>
<dbReference type="InterPro" id="IPR050157">
    <property type="entry name" value="PSI_iron-sulfur_center"/>
</dbReference>
<dbReference type="InterPro" id="IPR017491">
    <property type="entry name" value="PSI_PsaC"/>
</dbReference>
<dbReference type="NCBIfam" id="TIGR03048">
    <property type="entry name" value="PS_I_psaC"/>
    <property type="match status" value="1"/>
</dbReference>
<dbReference type="PANTHER" id="PTHR24960:SF79">
    <property type="entry name" value="PHOTOSYSTEM I IRON-SULFUR CENTER"/>
    <property type="match status" value="1"/>
</dbReference>
<dbReference type="PANTHER" id="PTHR24960">
    <property type="entry name" value="PHOTOSYSTEM I IRON-SULFUR CENTER-RELATED"/>
    <property type="match status" value="1"/>
</dbReference>
<dbReference type="Pfam" id="PF14697">
    <property type="entry name" value="Fer4_21"/>
    <property type="match status" value="1"/>
</dbReference>
<dbReference type="SUPFAM" id="SSF54862">
    <property type="entry name" value="4Fe-4S ferredoxins"/>
    <property type="match status" value="1"/>
</dbReference>
<dbReference type="PROSITE" id="PS00198">
    <property type="entry name" value="4FE4S_FER_1"/>
    <property type="match status" value="2"/>
</dbReference>
<dbReference type="PROSITE" id="PS51379">
    <property type="entry name" value="4FE4S_FER_2"/>
    <property type="match status" value="2"/>
</dbReference>
<evidence type="ECO:0000250" key="1"/>
<evidence type="ECO:0000255" key="2">
    <source>
        <dbReference type="HAMAP-Rule" id="MF_01303"/>
    </source>
</evidence>